<organism>
    <name type="scientific">Dehalococcoides mccartyi (strain CBDB1)</name>
    <dbReference type="NCBI Taxonomy" id="255470"/>
    <lineage>
        <taxon>Bacteria</taxon>
        <taxon>Bacillati</taxon>
        <taxon>Chloroflexota</taxon>
        <taxon>Dehalococcoidia</taxon>
        <taxon>Dehalococcoidales</taxon>
        <taxon>Dehalococcoidaceae</taxon>
        <taxon>Dehalococcoides</taxon>
    </lineage>
</organism>
<feature type="chain" id="PRO_1000002291" description="Cobyrinate a,c-diamide synthase">
    <location>
        <begin position="1"/>
        <end position="463"/>
    </location>
</feature>
<feature type="domain" description="GATase cobBQ-type" evidence="2">
    <location>
        <begin position="252"/>
        <end position="448"/>
    </location>
</feature>
<feature type="active site" description="Nucleophile" evidence="1">
    <location>
        <position position="335"/>
    </location>
</feature>
<feature type="site" description="Increases nucleophilicity of active site Cys" evidence="1">
    <location>
        <position position="440"/>
    </location>
</feature>
<proteinExistence type="inferred from homology"/>
<name>CBIA_DEHMC</name>
<protein>
    <recommendedName>
        <fullName evidence="1">Cobyrinate a,c-diamide synthase</fullName>
        <ecNumber evidence="1">6.3.5.11</ecNumber>
    </recommendedName>
    <alternativeName>
        <fullName evidence="1">Cobyrinic acid a,c-diamide synthetase</fullName>
    </alternativeName>
</protein>
<sequence>MNFPRIVIAGVSSSSGKTTISSGLTAALAQRGHKVAAYKCGPDYIDPGYLTLASNNPCHNLDSWMLSKDAMTEVFFHGLKNRDIALVEGVMGLYDGYSGERPGGSTAEIARLLSAPVILLVNISHMAESAAAIVLGYKNLDPRINIAGVILNQAGSTRHYEICRKAIEKYASTPVIGYLLRNKDLVIPERHLGLKTTSEGGELETFIQNLATRIESTIDIDRILEIARNAPPLPEKPLPCLFPETPACPVTRIAVAKDEAFSFYYQANLDMLSDWGAELCYFSPVHDTCLPPDIGGIYIGGGFPEIMAAELSANQPMKDTLTKAAADGMPIYAECGGLMYLSEAIEDFDSTKYLMLGLLPGISVMQKKLHRLGYTRAAVQNDNILSAKGTELRGHIFHWSKLPSPQTKPAYTLLEPAEFVGQNEGFIIGGSTNVLASYLHLHFGTNPDLAKNFIRISKDFCTI</sequence>
<gene>
    <name type="primary">cbiA</name>
    <name evidence="4" type="synonym">cobB</name>
    <name type="ordered locus">cbdbA149</name>
</gene>
<comment type="function">
    <text evidence="1">Catalyzes the ATP-dependent amidation of the two carboxylate groups at positions a and c of cobyrinate, using either L-glutamine or ammonia as the nitrogen source.</text>
</comment>
<comment type="catalytic activity">
    <reaction evidence="1">
        <text>cob(II)yrinate + 2 L-glutamine + 2 ATP + 2 H2O = cob(II)yrinate a,c diamide + 2 L-glutamate + 2 ADP + 2 phosphate + 2 H(+)</text>
        <dbReference type="Rhea" id="RHEA:26289"/>
        <dbReference type="ChEBI" id="CHEBI:15377"/>
        <dbReference type="ChEBI" id="CHEBI:15378"/>
        <dbReference type="ChEBI" id="CHEBI:29985"/>
        <dbReference type="ChEBI" id="CHEBI:30616"/>
        <dbReference type="ChEBI" id="CHEBI:43474"/>
        <dbReference type="ChEBI" id="CHEBI:58359"/>
        <dbReference type="ChEBI" id="CHEBI:58537"/>
        <dbReference type="ChEBI" id="CHEBI:58894"/>
        <dbReference type="ChEBI" id="CHEBI:456216"/>
        <dbReference type="EC" id="6.3.5.11"/>
    </reaction>
</comment>
<comment type="cofactor">
    <cofactor evidence="1">
        <name>Mg(2+)</name>
        <dbReference type="ChEBI" id="CHEBI:18420"/>
    </cofactor>
</comment>
<comment type="domain">
    <text evidence="1">Comprises of two domains. The C-terminal domain contains the binding site for glutamine and catalyzes the hydrolysis of this substrate to glutamate and ammonia. The N-terminal domain is anticipated to bind ATP and cobyrinate and catalyzes the ultimate synthesis of the diamide product. The ammonia produced via the glutaminase domain is probably translocated to the adjacent domain via a molecular tunnel, where it reacts with an activated intermediate.</text>
</comment>
<comment type="miscellaneous">
    <text evidence="1">The a and c carboxylates of cobyrinate are activated for nucleophilic attack via formation of a phosphorylated intermediate by ATP. CbiA catalyzes first the amidation of the c-carboxylate, and then that of the a-carboxylate.</text>
</comment>
<comment type="similarity">
    <text evidence="3">Belongs to the CobB/CbiA family.</text>
</comment>
<comment type="caution">
    <text evidence="3">The physiological significance of this enzyme is not known since D.mccartyi is cobalamin auxotroph.</text>
</comment>
<dbReference type="EC" id="6.3.5.11" evidence="1"/>
<dbReference type="EMBL" id="AJ965256">
    <property type="protein sequence ID" value="CAI82403.1"/>
    <property type="molecule type" value="Genomic_DNA"/>
</dbReference>
<dbReference type="RefSeq" id="WP_011308761.1">
    <property type="nucleotide sequence ID" value="NC_007356.1"/>
</dbReference>
<dbReference type="KEGG" id="deh:cbdbA149"/>
<dbReference type="HOGENOM" id="CLU_022752_2_0_0"/>
<dbReference type="Proteomes" id="UP000000433">
    <property type="component" value="Chromosome"/>
</dbReference>
<dbReference type="GO" id="GO:0005524">
    <property type="term" value="F:ATP binding"/>
    <property type="evidence" value="ECO:0007669"/>
    <property type="project" value="UniProtKB-UniRule"/>
</dbReference>
<dbReference type="GO" id="GO:0042242">
    <property type="term" value="F:cobyrinic acid a,c-diamide synthase activity"/>
    <property type="evidence" value="ECO:0007669"/>
    <property type="project" value="UniProtKB-UniRule"/>
</dbReference>
<dbReference type="GO" id="GO:0009236">
    <property type="term" value="P:cobalamin biosynthetic process"/>
    <property type="evidence" value="ECO:0007669"/>
    <property type="project" value="UniProtKB-UniRule"/>
</dbReference>
<dbReference type="CDD" id="cd05388">
    <property type="entry name" value="CobB_N"/>
    <property type="match status" value="1"/>
</dbReference>
<dbReference type="CDD" id="cd03130">
    <property type="entry name" value="GATase1_CobB"/>
    <property type="match status" value="1"/>
</dbReference>
<dbReference type="Gene3D" id="3.40.50.880">
    <property type="match status" value="1"/>
</dbReference>
<dbReference type="Gene3D" id="3.40.50.300">
    <property type="entry name" value="P-loop containing nucleotide triphosphate hydrolases"/>
    <property type="match status" value="2"/>
</dbReference>
<dbReference type="HAMAP" id="MF_00027">
    <property type="entry name" value="CobB_CbiA"/>
    <property type="match status" value="1"/>
</dbReference>
<dbReference type="InterPro" id="IPR004484">
    <property type="entry name" value="CbiA/CobB_synth"/>
</dbReference>
<dbReference type="InterPro" id="IPR029062">
    <property type="entry name" value="Class_I_gatase-like"/>
</dbReference>
<dbReference type="InterPro" id="IPR002586">
    <property type="entry name" value="CobQ/CobB/MinD/ParA_Nub-bd_dom"/>
</dbReference>
<dbReference type="InterPro" id="IPR011698">
    <property type="entry name" value="GATase_3"/>
</dbReference>
<dbReference type="InterPro" id="IPR027417">
    <property type="entry name" value="P-loop_NTPase"/>
</dbReference>
<dbReference type="NCBIfam" id="TIGR00379">
    <property type="entry name" value="cobB"/>
    <property type="match status" value="1"/>
</dbReference>
<dbReference type="NCBIfam" id="NF002204">
    <property type="entry name" value="PRK01077.1"/>
    <property type="match status" value="1"/>
</dbReference>
<dbReference type="PANTHER" id="PTHR43873">
    <property type="entry name" value="COBYRINATE A,C-DIAMIDE SYNTHASE"/>
    <property type="match status" value="1"/>
</dbReference>
<dbReference type="PANTHER" id="PTHR43873:SF1">
    <property type="entry name" value="COBYRINATE A,C-DIAMIDE SYNTHASE"/>
    <property type="match status" value="1"/>
</dbReference>
<dbReference type="Pfam" id="PF01656">
    <property type="entry name" value="CbiA"/>
    <property type="match status" value="1"/>
</dbReference>
<dbReference type="Pfam" id="PF07685">
    <property type="entry name" value="GATase_3"/>
    <property type="match status" value="1"/>
</dbReference>
<dbReference type="SUPFAM" id="SSF52317">
    <property type="entry name" value="Class I glutamine amidotransferase-like"/>
    <property type="match status" value="1"/>
</dbReference>
<dbReference type="SUPFAM" id="SSF52540">
    <property type="entry name" value="P-loop containing nucleoside triphosphate hydrolases"/>
    <property type="match status" value="1"/>
</dbReference>
<dbReference type="PROSITE" id="PS51274">
    <property type="entry name" value="GATASE_COBBQ"/>
    <property type="match status" value="1"/>
</dbReference>
<reference key="1">
    <citation type="journal article" date="2005" name="Nat. Biotechnol.">
        <title>Genome sequence of the chlorinated compound-respiring bacterium Dehalococcoides species strain CBDB1.</title>
        <authorList>
            <person name="Kube M."/>
            <person name="Beck A."/>
            <person name="Zinder S.H."/>
            <person name="Kuhl H."/>
            <person name="Reinhardt R."/>
            <person name="Adrian L."/>
        </authorList>
    </citation>
    <scope>NUCLEOTIDE SEQUENCE [LARGE SCALE GENOMIC DNA]</scope>
    <source>
        <strain>CBDB1</strain>
    </source>
</reference>
<evidence type="ECO:0000250" key="1">
    <source>
        <dbReference type="UniProtKB" id="P29946"/>
    </source>
</evidence>
<evidence type="ECO:0000255" key="2">
    <source>
        <dbReference type="PROSITE-ProRule" id="PRU00606"/>
    </source>
</evidence>
<evidence type="ECO:0000305" key="3"/>
<evidence type="ECO:0000312" key="4">
    <source>
        <dbReference type="EMBL" id="CAI82403.1"/>
    </source>
</evidence>
<keyword id="KW-0067">ATP-binding</keyword>
<keyword id="KW-0315">Glutamine amidotransferase</keyword>
<keyword id="KW-0436">Ligase</keyword>
<keyword id="KW-0460">Magnesium</keyword>
<keyword id="KW-0547">Nucleotide-binding</keyword>
<accession>Q3ZWJ9</accession>